<name>DNLJ_XYLFM</name>
<dbReference type="EC" id="6.5.1.2" evidence="1"/>
<dbReference type="EMBL" id="CP000941">
    <property type="protein sequence ID" value="ACA12985.1"/>
    <property type="status" value="ALT_INIT"/>
    <property type="molecule type" value="Genomic_DNA"/>
</dbReference>
<dbReference type="RefSeq" id="WP_020851963.1">
    <property type="nucleotide sequence ID" value="NC_010513.1"/>
</dbReference>
<dbReference type="SMR" id="B0U5G7"/>
<dbReference type="KEGG" id="xfm:Xfasm12_2128"/>
<dbReference type="HOGENOM" id="CLU_007764_2_2_6"/>
<dbReference type="GO" id="GO:0005829">
    <property type="term" value="C:cytosol"/>
    <property type="evidence" value="ECO:0007669"/>
    <property type="project" value="TreeGrafter"/>
</dbReference>
<dbReference type="GO" id="GO:0003911">
    <property type="term" value="F:DNA ligase (NAD+) activity"/>
    <property type="evidence" value="ECO:0007669"/>
    <property type="project" value="UniProtKB-UniRule"/>
</dbReference>
<dbReference type="GO" id="GO:0046872">
    <property type="term" value="F:metal ion binding"/>
    <property type="evidence" value="ECO:0007669"/>
    <property type="project" value="UniProtKB-KW"/>
</dbReference>
<dbReference type="GO" id="GO:0006281">
    <property type="term" value="P:DNA repair"/>
    <property type="evidence" value="ECO:0007669"/>
    <property type="project" value="UniProtKB-KW"/>
</dbReference>
<dbReference type="GO" id="GO:0006260">
    <property type="term" value="P:DNA replication"/>
    <property type="evidence" value="ECO:0007669"/>
    <property type="project" value="UniProtKB-KW"/>
</dbReference>
<dbReference type="CDD" id="cd17748">
    <property type="entry name" value="BRCT_DNA_ligase_like"/>
    <property type="match status" value="1"/>
</dbReference>
<dbReference type="CDD" id="cd00114">
    <property type="entry name" value="LIGANc"/>
    <property type="match status" value="1"/>
</dbReference>
<dbReference type="FunFam" id="1.10.150.20:FF:000006">
    <property type="entry name" value="DNA ligase"/>
    <property type="match status" value="1"/>
</dbReference>
<dbReference type="FunFam" id="1.10.287.610:FF:000002">
    <property type="entry name" value="DNA ligase"/>
    <property type="match status" value="1"/>
</dbReference>
<dbReference type="FunFam" id="2.40.50.140:FF:000012">
    <property type="entry name" value="DNA ligase"/>
    <property type="match status" value="1"/>
</dbReference>
<dbReference type="FunFam" id="3.30.470.30:FF:000001">
    <property type="entry name" value="DNA ligase"/>
    <property type="match status" value="1"/>
</dbReference>
<dbReference type="Gene3D" id="6.20.10.30">
    <property type="match status" value="1"/>
</dbReference>
<dbReference type="Gene3D" id="1.10.150.20">
    <property type="entry name" value="5' to 3' exonuclease, C-terminal subdomain"/>
    <property type="match status" value="3"/>
</dbReference>
<dbReference type="Gene3D" id="3.40.50.10190">
    <property type="entry name" value="BRCT domain"/>
    <property type="match status" value="1"/>
</dbReference>
<dbReference type="Gene3D" id="3.30.470.30">
    <property type="entry name" value="DNA ligase/mRNA capping enzyme"/>
    <property type="match status" value="1"/>
</dbReference>
<dbReference type="Gene3D" id="1.10.287.610">
    <property type="entry name" value="Helix hairpin bin"/>
    <property type="match status" value="1"/>
</dbReference>
<dbReference type="Gene3D" id="2.40.50.140">
    <property type="entry name" value="Nucleic acid-binding proteins"/>
    <property type="match status" value="1"/>
</dbReference>
<dbReference type="HAMAP" id="MF_01588">
    <property type="entry name" value="DNA_ligase_A"/>
    <property type="match status" value="1"/>
</dbReference>
<dbReference type="InterPro" id="IPR001357">
    <property type="entry name" value="BRCT_dom"/>
</dbReference>
<dbReference type="InterPro" id="IPR036420">
    <property type="entry name" value="BRCT_dom_sf"/>
</dbReference>
<dbReference type="InterPro" id="IPR041663">
    <property type="entry name" value="DisA/LigA_HHH"/>
</dbReference>
<dbReference type="InterPro" id="IPR001679">
    <property type="entry name" value="DNA_ligase"/>
</dbReference>
<dbReference type="InterPro" id="IPR018239">
    <property type="entry name" value="DNA_ligase_AS"/>
</dbReference>
<dbReference type="InterPro" id="IPR013839">
    <property type="entry name" value="DNAligase_adenylation"/>
</dbReference>
<dbReference type="InterPro" id="IPR013840">
    <property type="entry name" value="DNAligase_N"/>
</dbReference>
<dbReference type="InterPro" id="IPR012340">
    <property type="entry name" value="NA-bd_OB-fold"/>
</dbReference>
<dbReference type="InterPro" id="IPR004150">
    <property type="entry name" value="NAD_DNA_ligase_OB"/>
</dbReference>
<dbReference type="InterPro" id="IPR010994">
    <property type="entry name" value="RuvA_2-like"/>
</dbReference>
<dbReference type="InterPro" id="IPR004149">
    <property type="entry name" value="Znf_DNAligase_C4"/>
</dbReference>
<dbReference type="NCBIfam" id="TIGR00575">
    <property type="entry name" value="dnlj"/>
    <property type="match status" value="1"/>
</dbReference>
<dbReference type="NCBIfam" id="NF005932">
    <property type="entry name" value="PRK07956.1"/>
    <property type="match status" value="1"/>
</dbReference>
<dbReference type="PANTHER" id="PTHR23389">
    <property type="entry name" value="CHROMOSOME TRANSMISSION FIDELITY FACTOR 18"/>
    <property type="match status" value="1"/>
</dbReference>
<dbReference type="PANTHER" id="PTHR23389:SF9">
    <property type="entry name" value="DNA LIGASE"/>
    <property type="match status" value="1"/>
</dbReference>
<dbReference type="Pfam" id="PF00533">
    <property type="entry name" value="BRCT"/>
    <property type="match status" value="1"/>
</dbReference>
<dbReference type="Pfam" id="PF01653">
    <property type="entry name" value="DNA_ligase_aden"/>
    <property type="match status" value="1"/>
</dbReference>
<dbReference type="Pfam" id="PF03120">
    <property type="entry name" value="DNA_ligase_OB"/>
    <property type="match status" value="1"/>
</dbReference>
<dbReference type="Pfam" id="PF03119">
    <property type="entry name" value="DNA_ligase_ZBD"/>
    <property type="match status" value="1"/>
</dbReference>
<dbReference type="Pfam" id="PF12826">
    <property type="entry name" value="HHH_2"/>
    <property type="match status" value="1"/>
</dbReference>
<dbReference type="Pfam" id="PF22745">
    <property type="entry name" value="Nlig-Ia"/>
    <property type="match status" value="1"/>
</dbReference>
<dbReference type="PIRSF" id="PIRSF001604">
    <property type="entry name" value="LigA"/>
    <property type="match status" value="1"/>
</dbReference>
<dbReference type="SMART" id="SM00292">
    <property type="entry name" value="BRCT"/>
    <property type="match status" value="1"/>
</dbReference>
<dbReference type="SMART" id="SM00532">
    <property type="entry name" value="LIGANc"/>
    <property type="match status" value="1"/>
</dbReference>
<dbReference type="SUPFAM" id="SSF52113">
    <property type="entry name" value="BRCT domain"/>
    <property type="match status" value="1"/>
</dbReference>
<dbReference type="SUPFAM" id="SSF56091">
    <property type="entry name" value="DNA ligase/mRNA capping enzyme, catalytic domain"/>
    <property type="match status" value="1"/>
</dbReference>
<dbReference type="SUPFAM" id="SSF50249">
    <property type="entry name" value="Nucleic acid-binding proteins"/>
    <property type="match status" value="1"/>
</dbReference>
<dbReference type="SUPFAM" id="SSF47781">
    <property type="entry name" value="RuvA domain 2-like"/>
    <property type="match status" value="2"/>
</dbReference>
<dbReference type="PROSITE" id="PS50172">
    <property type="entry name" value="BRCT"/>
    <property type="match status" value="1"/>
</dbReference>
<dbReference type="PROSITE" id="PS01055">
    <property type="entry name" value="DNA_LIGASE_N1"/>
    <property type="match status" value="1"/>
</dbReference>
<keyword id="KW-0227">DNA damage</keyword>
<keyword id="KW-0234">DNA repair</keyword>
<keyword id="KW-0235">DNA replication</keyword>
<keyword id="KW-0436">Ligase</keyword>
<keyword id="KW-0460">Magnesium</keyword>
<keyword id="KW-0464">Manganese</keyword>
<keyword id="KW-0479">Metal-binding</keyword>
<keyword id="KW-0520">NAD</keyword>
<keyword id="KW-0862">Zinc</keyword>
<gene>
    <name evidence="1" type="primary">ligA</name>
    <name type="ordered locus">Xfasm12_2128</name>
</gene>
<reference key="1">
    <citation type="journal article" date="2010" name="J. Bacteriol.">
        <title>Whole genome sequences of two Xylella fastidiosa strains (M12 and M23) causing almond leaf scorch disease in California.</title>
        <authorList>
            <person name="Chen J."/>
            <person name="Xie G."/>
            <person name="Han S."/>
            <person name="Chertkov O."/>
            <person name="Sims D."/>
            <person name="Civerolo E.L."/>
        </authorList>
    </citation>
    <scope>NUCLEOTIDE SEQUENCE [LARGE SCALE GENOMIC DNA]</scope>
    <source>
        <strain>M12</strain>
    </source>
</reference>
<comment type="function">
    <text evidence="1">DNA ligase that catalyzes the formation of phosphodiester linkages between 5'-phosphoryl and 3'-hydroxyl groups in double-stranded DNA using NAD as a coenzyme and as the energy source for the reaction. It is essential for DNA replication and repair of damaged DNA.</text>
</comment>
<comment type="catalytic activity">
    <reaction evidence="1">
        <text>NAD(+) + (deoxyribonucleotide)n-3'-hydroxyl + 5'-phospho-(deoxyribonucleotide)m = (deoxyribonucleotide)n+m + AMP + beta-nicotinamide D-nucleotide.</text>
        <dbReference type="EC" id="6.5.1.2"/>
    </reaction>
</comment>
<comment type="cofactor">
    <cofactor evidence="1">
        <name>Mg(2+)</name>
        <dbReference type="ChEBI" id="CHEBI:18420"/>
    </cofactor>
    <cofactor evidence="1">
        <name>Mn(2+)</name>
        <dbReference type="ChEBI" id="CHEBI:29035"/>
    </cofactor>
</comment>
<comment type="similarity">
    <text evidence="1">Belongs to the NAD-dependent DNA ligase family. LigA subfamily.</text>
</comment>
<comment type="sequence caution" evidence="2">
    <conflict type="erroneous initiation">
        <sequence resource="EMBL-CDS" id="ACA12985"/>
    </conflict>
</comment>
<proteinExistence type="inferred from homology"/>
<feature type="chain" id="PRO_0000380512" description="DNA ligase">
    <location>
        <begin position="1"/>
        <end position="831"/>
    </location>
</feature>
<feature type="domain" description="BRCT" evidence="1">
    <location>
        <begin position="749"/>
        <end position="831"/>
    </location>
</feature>
<feature type="active site" description="N6-AMP-lysine intermediate" evidence="1">
    <location>
        <position position="116"/>
    </location>
</feature>
<feature type="binding site" evidence="1">
    <location>
        <begin position="34"/>
        <end position="38"/>
    </location>
    <ligand>
        <name>NAD(+)</name>
        <dbReference type="ChEBI" id="CHEBI:57540"/>
    </ligand>
</feature>
<feature type="binding site" evidence="1">
    <location>
        <begin position="83"/>
        <end position="84"/>
    </location>
    <ligand>
        <name>NAD(+)</name>
        <dbReference type="ChEBI" id="CHEBI:57540"/>
    </ligand>
</feature>
<feature type="binding site" evidence="1">
    <location>
        <position position="114"/>
    </location>
    <ligand>
        <name>NAD(+)</name>
        <dbReference type="ChEBI" id="CHEBI:57540"/>
    </ligand>
</feature>
<feature type="binding site" evidence="1">
    <location>
        <position position="137"/>
    </location>
    <ligand>
        <name>NAD(+)</name>
        <dbReference type="ChEBI" id="CHEBI:57540"/>
    </ligand>
</feature>
<feature type="binding site" evidence="1">
    <location>
        <position position="174"/>
    </location>
    <ligand>
        <name>NAD(+)</name>
        <dbReference type="ChEBI" id="CHEBI:57540"/>
    </ligand>
</feature>
<feature type="binding site" evidence="1">
    <location>
        <position position="291"/>
    </location>
    <ligand>
        <name>NAD(+)</name>
        <dbReference type="ChEBI" id="CHEBI:57540"/>
    </ligand>
</feature>
<feature type="binding site" evidence="1">
    <location>
        <position position="315"/>
    </location>
    <ligand>
        <name>NAD(+)</name>
        <dbReference type="ChEBI" id="CHEBI:57540"/>
    </ligand>
</feature>
<feature type="binding site" evidence="1">
    <location>
        <position position="409"/>
    </location>
    <ligand>
        <name>Zn(2+)</name>
        <dbReference type="ChEBI" id="CHEBI:29105"/>
    </ligand>
</feature>
<feature type="binding site" evidence="1">
    <location>
        <position position="412"/>
    </location>
    <ligand>
        <name>Zn(2+)</name>
        <dbReference type="ChEBI" id="CHEBI:29105"/>
    </ligand>
</feature>
<feature type="binding site" evidence="1">
    <location>
        <position position="427"/>
    </location>
    <ligand>
        <name>Zn(2+)</name>
        <dbReference type="ChEBI" id="CHEBI:29105"/>
    </ligand>
</feature>
<feature type="binding site" evidence="1">
    <location>
        <position position="433"/>
    </location>
    <ligand>
        <name>Zn(2+)</name>
        <dbReference type="ChEBI" id="CHEBI:29105"/>
    </ligand>
</feature>
<evidence type="ECO:0000255" key="1">
    <source>
        <dbReference type="HAMAP-Rule" id="MF_01588"/>
    </source>
</evidence>
<evidence type="ECO:0000305" key="2"/>
<protein>
    <recommendedName>
        <fullName evidence="1">DNA ligase</fullName>
        <ecNumber evidence="1">6.5.1.2</ecNumber>
    </recommendedName>
    <alternativeName>
        <fullName evidence="1">Polydeoxyribonucleotide synthase [NAD(+)]</fullName>
    </alternativeName>
</protein>
<accession>B0U5G7</accession>
<sequence length="831" mass="91654">MIPLDPAQRAAELRRRLQEANYHYHVLDQPRIPDADYDRMLRELDALEATYPDLATPDSPTQRVGHTIATAFSEVRHTVPMLSLNNAFSDPEVLEFVRRITARLGETAPSFSAEPKLDGLAISLRYQNGIFIQGATRGDGVTGEDVTANLRTLPTIPQRLQSDTWPTVLEVRGEVYMPRPDFEAYNTQARLRGWKVLANPRNGAAGSLRQLDPHITAQRPLSFYAYGIGEVADDVSFHSHSEILASLRAWGFPVSPLVELVYGSEGLLNYYRRMETIRDTLPFDIDGIVYKLDDLSGQHEMGFVARAPRWAIAHKFPAQEQTTTVEAIEIQIGRTGAATPVARLTPVQVAGVTVTSATLHNADQIARLDVRIGDTVIVRRAGDVIPEVVAVITDSRPPGVTAWSMPMACPVCGSEIVRETGAAVWRCSGELACPAQRKEAIRHFVSRRAMDVEGLGVKCIELLVDAAVVHGVADLYHLSLDQLLRLRLVTNAQTPTMLLREARDHVTGMRYQQLEEILRTVGVDLSGEGDVPEHWQIDVLRAQWPDFDWNHKKIATKWAQNLIAAIDRSRQTTLERFLFALGMTHVGETTAKALAHSFGDLAIIRQLPWPLFKCVPDIGGEVARAIGHFMDQPANQQAIDDLVERGVRITDAHPPTSTLRDQLTLASLLEHLEIPKITPMRAVQLATLAPTLPLLAEADLDALLQAGVPQPAAQSLTEWFQSPDNISLARRLQHCCDVLLAQLPSPDRAHTAPLNGQSVVLTGKLASLTREAAATRLEMLGAKIVGSVSKKTSFLVAGEDPGSKLDKAHALHVDIWDEARLLDFLEQYSAQ</sequence>
<organism>
    <name type="scientific">Xylella fastidiosa (strain M12)</name>
    <dbReference type="NCBI Taxonomy" id="405440"/>
    <lineage>
        <taxon>Bacteria</taxon>
        <taxon>Pseudomonadati</taxon>
        <taxon>Pseudomonadota</taxon>
        <taxon>Gammaproteobacteria</taxon>
        <taxon>Lysobacterales</taxon>
        <taxon>Lysobacteraceae</taxon>
        <taxon>Xylella</taxon>
    </lineage>
</organism>